<reference key="1">
    <citation type="journal article" date="1996" name="Science">
        <title>Complete genome sequence of the methanogenic archaeon, Methanococcus jannaschii.</title>
        <authorList>
            <person name="Bult C.J."/>
            <person name="White O."/>
            <person name="Olsen G.J."/>
            <person name="Zhou L."/>
            <person name="Fleischmann R.D."/>
            <person name="Sutton G.G."/>
            <person name="Blake J.A."/>
            <person name="FitzGerald L.M."/>
            <person name="Clayton R.A."/>
            <person name="Gocayne J.D."/>
            <person name="Kerlavage A.R."/>
            <person name="Dougherty B.A."/>
            <person name="Tomb J.-F."/>
            <person name="Adams M.D."/>
            <person name="Reich C.I."/>
            <person name="Overbeek R."/>
            <person name="Kirkness E.F."/>
            <person name="Weinstock K.G."/>
            <person name="Merrick J.M."/>
            <person name="Glodek A."/>
            <person name="Scott J.L."/>
            <person name="Geoghagen N.S.M."/>
            <person name="Weidman J.F."/>
            <person name="Fuhrmann J.L."/>
            <person name="Nguyen D."/>
            <person name="Utterback T.R."/>
            <person name="Kelley J.M."/>
            <person name="Peterson J.D."/>
            <person name="Sadow P.W."/>
            <person name="Hanna M.C."/>
            <person name="Cotton M.D."/>
            <person name="Roberts K.M."/>
            <person name="Hurst M.A."/>
            <person name="Kaine B.P."/>
            <person name="Borodovsky M."/>
            <person name="Klenk H.-P."/>
            <person name="Fraser C.M."/>
            <person name="Smith H.O."/>
            <person name="Woese C.R."/>
            <person name="Venter J.C."/>
        </authorList>
    </citation>
    <scope>NUCLEOTIDE SEQUENCE [LARGE SCALE GENOMIC DNA]</scope>
    <source>
        <strain>ATCC 43067 / DSM 2661 / JAL-1 / JCM 10045 / NBRC 100440</strain>
    </source>
</reference>
<feature type="chain" id="PRO_0000107380" description="Uncharacterized protein MJ1503">
    <location>
        <begin position="1"/>
        <end position="132"/>
    </location>
</feature>
<sequence>MSKLLLKTPCTTWTFDSLMACVFGIKVSDVKVYFDILKNGPSKINDIAERINRDRSTVQRAVQNLMNAGLVKRKQVNIKDGGYYYVYEAIPFEETKKIIKKTMEEWCNNMKKWVEELEFEDVVKEYLENIEE</sequence>
<proteinExistence type="predicted"/>
<protein>
    <recommendedName>
        <fullName>Uncharacterized protein MJ1503</fullName>
    </recommendedName>
</protein>
<accession>Q58898</accession>
<dbReference type="EMBL" id="L77117">
    <property type="protein sequence ID" value="AAB99516.1"/>
    <property type="molecule type" value="Genomic_DNA"/>
</dbReference>
<dbReference type="PIR" id="F64487">
    <property type="entry name" value="F64487"/>
</dbReference>
<dbReference type="RefSeq" id="WP_010871026.1">
    <property type="nucleotide sequence ID" value="NC_000909.1"/>
</dbReference>
<dbReference type="SMR" id="Q58898"/>
<dbReference type="STRING" id="243232.MJ_1503"/>
<dbReference type="PaxDb" id="243232-MJ_1503"/>
<dbReference type="EnsemblBacteria" id="AAB99516">
    <property type="protein sequence ID" value="AAB99516"/>
    <property type="gene ID" value="MJ_1503"/>
</dbReference>
<dbReference type="GeneID" id="1452410"/>
<dbReference type="KEGG" id="mja:MJ_1503"/>
<dbReference type="eggNOG" id="arCOG02242">
    <property type="taxonomic scope" value="Archaea"/>
</dbReference>
<dbReference type="HOGENOM" id="CLU_140786_1_0_2"/>
<dbReference type="InParanoid" id="Q58898"/>
<dbReference type="OrthoDB" id="51378at2157"/>
<dbReference type="PhylomeDB" id="Q58898"/>
<dbReference type="Proteomes" id="UP000000805">
    <property type="component" value="Chromosome"/>
</dbReference>
<dbReference type="CDD" id="cd00090">
    <property type="entry name" value="HTH_ARSR"/>
    <property type="match status" value="1"/>
</dbReference>
<dbReference type="Gene3D" id="1.10.10.10">
    <property type="entry name" value="Winged helix-like DNA-binding domain superfamily/Winged helix DNA-binding domain"/>
    <property type="match status" value="1"/>
</dbReference>
<dbReference type="InterPro" id="IPR011991">
    <property type="entry name" value="ArsR-like_HTH"/>
</dbReference>
<dbReference type="InterPro" id="IPR051797">
    <property type="entry name" value="TrmB-like"/>
</dbReference>
<dbReference type="InterPro" id="IPR002831">
    <property type="entry name" value="Tscrpt_reg_TrmB_N"/>
</dbReference>
<dbReference type="InterPro" id="IPR036388">
    <property type="entry name" value="WH-like_DNA-bd_sf"/>
</dbReference>
<dbReference type="InterPro" id="IPR036390">
    <property type="entry name" value="WH_DNA-bd_sf"/>
</dbReference>
<dbReference type="PANTHER" id="PTHR34293">
    <property type="entry name" value="HTH-TYPE TRANSCRIPTIONAL REGULATOR TRMBL2"/>
    <property type="match status" value="1"/>
</dbReference>
<dbReference type="PANTHER" id="PTHR34293:SF1">
    <property type="entry name" value="HTH-TYPE TRANSCRIPTIONAL REGULATOR TRMBL2"/>
    <property type="match status" value="1"/>
</dbReference>
<dbReference type="Pfam" id="PF01978">
    <property type="entry name" value="TrmB"/>
    <property type="match status" value="1"/>
</dbReference>
<dbReference type="SUPFAM" id="SSF46785">
    <property type="entry name" value="Winged helix' DNA-binding domain"/>
    <property type="match status" value="1"/>
</dbReference>
<organism>
    <name type="scientific">Methanocaldococcus jannaschii (strain ATCC 43067 / DSM 2661 / JAL-1 / JCM 10045 / NBRC 100440)</name>
    <name type="common">Methanococcus jannaschii</name>
    <dbReference type="NCBI Taxonomy" id="243232"/>
    <lineage>
        <taxon>Archaea</taxon>
        <taxon>Methanobacteriati</taxon>
        <taxon>Methanobacteriota</taxon>
        <taxon>Methanomada group</taxon>
        <taxon>Methanococci</taxon>
        <taxon>Methanococcales</taxon>
        <taxon>Methanocaldococcaceae</taxon>
        <taxon>Methanocaldococcus</taxon>
    </lineage>
</organism>
<name>Y1503_METJA</name>
<gene>
    <name type="ordered locus">MJ1503</name>
</gene>
<keyword id="KW-1185">Reference proteome</keyword>